<evidence type="ECO:0000250" key="1"/>
<evidence type="ECO:0000305" key="2"/>
<sequence length="217" mass="24315">EFASAYMADLKQFLVAQKNEGRQIFPRGPEYFRALDLTPLDKVRVVILGQDPYHGDGQAHGLCFSVRPGVRTPPSLVNIYKELNTDLGIPPARHGFLESWARQGVLLLNSVLTVRARERASHQGHGWEKFTDAIIRAVNEAEHPVVFMLWGSYAQKKAAFVDRSRHLVLRAPHPSPLSAHSGFLGCRHFSQANAFLESKGFDPIDWRLPENPAADIN</sequence>
<comment type="function">
    <text evidence="1">Excises uracil residues from the DNA which can arise as a result of misincorporation of dUMP residues by DNA polymerase or due to deamination of cytosine.</text>
</comment>
<comment type="catalytic activity">
    <reaction>
        <text>Hydrolyzes single-stranded DNA or mismatched double-stranded DNA and polynucleotides, releasing free uracil.</text>
        <dbReference type="EC" id="3.2.2.27"/>
    </reaction>
</comment>
<comment type="subcellular location">
    <subcellularLocation>
        <location evidence="1">Cytoplasm</location>
    </subcellularLocation>
</comment>
<comment type="similarity">
    <text evidence="2">Belongs to the uracil-DNA glycosylase (UDG) superfamily. UNG family.</text>
</comment>
<comment type="caution">
    <text evidence="2">Was originally thought to originate from Pseudomonas denitrificans, but similarity searches show that the sequence is much closer to Sinorhizobium. The entry's taxonomy has been changed.</text>
</comment>
<name>UNG_SINSX</name>
<proteinExistence type="inferred from homology"/>
<dbReference type="EC" id="3.2.2.27"/>
<dbReference type="EMBL" id="M59301">
    <property type="status" value="NOT_ANNOTATED_CDS"/>
    <property type="molecule type" value="Genomic_DNA"/>
</dbReference>
<dbReference type="PIR" id="I36145">
    <property type="entry name" value="I36145"/>
</dbReference>
<dbReference type="SMR" id="P29950"/>
<dbReference type="GO" id="GO:0005737">
    <property type="term" value="C:cytoplasm"/>
    <property type="evidence" value="ECO:0007669"/>
    <property type="project" value="UniProtKB-SubCell"/>
</dbReference>
<dbReference type="GO" id="GO:0004844">
    <property type="term" value="F:uracil DNA N-glycosylase activity"/>
    <property type="evidence" value="ECO:0007669"/>
    <property type="project" value="UniProtKB-EC"/>
</dbReference>
<dbReference type="GO" id="GO:0097510">
    <property type="term" value="P:base-excision repair, AP site formation via deaminated base removal"/>
    <property type="evidence" value="ECO:0007669"/>
    <property type="project" value="TreeGrafter"/>
</dbReference>
<dbReference type="CDD" id="cd10027">
    <property type="entry name" value="UDG-F1-like"/>
    <property type="match status" value="1"/>
</dbReference>
<dbReference type="FunFam" id="3.40.470.10:FF:000001">
    <property type="entry name" value="Uracil-DNA glycosylase"/>
    <property type="match status" value="1"/>
</dbReference>
<dbReference type="Gene3D" id="3.40.470.10">
    <property type="entry name" value="Uracil-DNA glycosylase-like domain"/>
    <property type="match status" value="1"/>
</dbReference>
<dbReference type="HAMAP" id="MF_00148">
    <property type="entry name" value="UDG"/>
    <property type="match status" value="1"/>
</dbReference>
<dbReference type="InterPro" id="IPR002043">
    <property type="entry name" value="UDG_fam1"/>
</dbReference>
<dbReference type="InterPro" id="IPR018085">
    <property type="entry name" value="Ura-DNA_Glyclase_AS"/>
</dbReference>
<dbReference type="InterPro" id="IPR005122">
    <property type="entry name" value="Uracil-DNA_glycosylase-like"/>
</dbReference>
<dbReference type="InterPro" id="IPR036895">
    <property type="entry name" value="Uracil-DNA_glycosylase-like_sf"/>
</dbReference>
<dbReference type="NCBIfam" id="NF003588">
    <property type="entry name" value="PRK05254.1-1"/>
    <property type="match status" value="1"/>
</dbReference>
<dbReference type="NCBIfam" id="NF003589">
    <property type="entry name" value="PRK05254.1-2"/>
    <property type="match status" value="1"/>
</dbReference>
<dbReference type="NCBIfam" id="NF003591">
    <property type="entry name" value="PRK05254.1-4"/>
    <property type="match status" value="1"/>
</dbReference>
<dbReference type="NCBIfam" id="NF003592">
    <property type="entry name" value="PRK05254.1-5"/>
    <property type="match status" value="1"/>
</dbReference>
<dbReference type="NCBIfam" id="TIGR00628">
    <property type="entry name" value="ung"/>
    <property type="match status" value="1"/>
</dbReference>
<dbReference type="PANTHER" id="PTHR11264">
    <property type="entry name" value="URACIL-DNA GLYCOSYLASE"/>
    <property type="match status" value="1"/>
</dbReference>
<dbReference type="PANTHER" id="PTHR11264:SF0">
    <property type="entry name" value="URACIL-DNA GLYCOSYLASE"/>
    <property type="match status" value="1"/>
</dbReference>
<dbReference type="Pfam" id="PF03167">
    <property type="entry name" value="UDG"/>
    <property type="match status" value="1"/>
</dbReference>
<dbReference type="SMART" id="SM00986">
    <property type="entry name" value="UDG"/>
    <property type="match status" value="1"/>
</dbReference>
<dbReference type="SMART" id="SM00987">
    <property type="entry name" value="UreE_C"/>
    <property type="match status" value="1"/>
</dbReference>
<dbReference type="SUPFAM" id="SSF52141">
    <property type="entry name" value="Uracil-DNA glycosylase-like"/>
    <property type="match status" value="1"/>
</dbReference>
<dbReference type="PROSITE" id="PS00130">
    <property type="entry name" value="U_DNA_GLYCOSYLASE"/>
    <property type="match status" value="1"/>
</dbReference>
<reference key="1">
    <citation type="journal article" date="1990" name="J. Bacteriol.">
        <title>Genetic and sequence analysis of an 8.7-kilobase Pseudomonas denitrificans fragment carrying eight genes involved in transformation of precorrin-2 to cobyrinic acid.</title>
        <authorList>
            <person name="Crouzet J."/>
            <person name="Cameron B."/>
            <person name="Cauchois L."/>
            <person name="Rigault S."/>
            <person name="Rouyez M.-C."/>
            <person name="Blanche F."/>
            <person name="Thibaut D."/>
            <person name="Debussche L."/>
        </authorList>
    </citation>
    <scope>NUCLEOTIDE SEQUENCE [GENOMIC DNA]</scope>
    <source>
        <strain>SC510</strain>
    </source>
</reference>
<reference key="2">
    <citation type="unpublished observations" date="1993-02">
        <authorList>
            <person name="Aasland R."/>
        </authorList>
    </citation>
    <scope>IDENTIFICATION</scope>
    <scope>IDENTIFICATION OF PROBABLE FRAMESHIFT</scope>
</reference>
<organism>
    <name type="scientific">Sinorhizobium sp</name>
    <dbReference type="NCBI Taxonomy" id="42445"/>
    <lineage>
        <taxon>Bacteria</taxon>
        <taxon>Pseudomonadati</taxon>
        <taxon>Pseudomonadota</taxon>
        <taxon>Alphaproteobacteria</taxon>
        <taxon>Hyphomicrobiales</taxon>
        <taxon>Rhizobiaceae</taxon>
        <taxon>Sinorhizobium/Ensifer group</taxon>
        <taxon>Sinorhizobium</taxon>
    </lineage>
</organism>
<keyword id="KW-0963">Cytoplasm</keyword>
<keyword id="KW-0227">DNA damage</keyword>
<keyword id="KW-0234">DNA repair</keyword>
<keyword id="KW-0378">Hydrolase</keyword>
<protein>
    <recommendedName>
        <fullName>Uracil-DNA glycosylase</fullName>
        <shortName>UDG</shortName>
        <ecNumber>3.2.2.27</ecNumber>
    </recommendedName>
</protein>
<feature type="chain" id="PRO_0000176128" description="Uracil-DNA glycosylase">
    <location>
        <begin position="1" status="less than"/>
        <end position="217"/>
    </location>
</feature>
<feature type="active site" description="Proton acceptor" evidence="1">
    <location>
        <position position="51"/>
    </location>
</feature>
<feature type="non-terminal residue">
    <location>
        <position position="1"/>
    </location>
</feature>
<accession>P29950</accession>
<gene>
    <name type="primary">ung</name>
</gene>